<name>ACCD_PSEPF</name>
<comment type="function">
    <text evidence="1">Component of the acetyl coenzyme A carboxylase (ACC) complex. Biotin carboxylase (BC) catalyzes the carboxylation of biotin on its carrier protein (BCCP) and then the CO(2) group is transferred by the transcarboxylase to acetyl-CoA to form malonyl-CoA.</text>
</comment>
<comment type="catalytic activity">
    <reaction evidence="1">
        <text>N(6)-carboxybiotinyl-L-lysyl-[protein] + acetyl-CoA = N(6)-biotinyl-L-lysyl-[protein] + malonyl-CoA</text>
        <dbReference type="Rhea" id="RHEA:54728"/>
        <dbReference type="Rhea" id="RHEA-COMP:10505"/>
        <dbReference type="Rhea" id="RHEA-COMP:10506"/>
        <dbReference type="ChEBI" id="CHEBI:57288"/>
        <dbReference type="ChEBI" id="CHEBI:57384"/>
        <dbReference type="ChEBI" id="CHEBI:83144"/>
        <dbReference type="ChEBI" id="CHEBI:83145"/>
        <dbReference type="EC" id="2.1.3.15"/>
    </reaction>
</comment>
<comment type="cofactor">
    <cofactor evidence="1">
        <name>Zn(2+)</name>
        <dbReference type="ChEBI" id="CHEBI:29105"/>
    </cofactor>
    <text evidence="1">Binds 1 zinc ion per subunit.</text>
</comment>
<comment type="pathway">
    <text evidence="1">Lipid metabolism; malonyl-CoA biosynthesis; malonyl-CoA from acetyl-CoA: step 1/1.</text>
</comment>
<comment type="subunit">
    <text evidence="1">Acetyl-CoA carboxylase is a heterohexamer composed of biotin carboxyl carrier protein (AccB), biotin carboxylase (AccC) and two subunits each of ACCase subunit alpha (AccA) and ACCase subunit beta (AccD).</text>
</comment>
<comment type="subcellular location">
    <subcellularLocation>
        <location evidence="1">Cytoplasm</location>
    </subcellularLocation>
</comment>
<comment type="similarity">
    <text evidence="1">Belongs to the AccD/PCCB family.</text>
</comment>
<keyword id="KW-0067">ATP-binding</keyword>
<keyword id="KW-0963">Cytoplasm</keyword>
<keyword id="KW-0275">Fatty acid biosynthesis</keyword>
<keyword id="KW-0276">Fatty acid metabolism</keyword>
<keyword id="KW-0444">Lipid biosynthesis</keyword>
<keyword id="KW-0443">Lipid metabolism</keyword>
<keyword id="KW-0479">Metal-binding</keyword>
<keyword id="KW-0547">Nucleotide-binding</keyword>
<keyword id="KW-0808">Transferase</keyword>
<keyword id="KW-0862">Zinc</keyword>
<keyword id="KW-0863">Zinc-finger</keyword>
<dbReference type="EC" id="2.1.3.15" evidence="1"/>
<dbReference type="EMBL" id="CP000094">
    <property type="protein sequence ID" value="ABA73641.1"/>
    <property type="molecule type" value="Genomic_DNA"/>
</dbReference>
<dbReference type="RefSeq" id="WP_011333359.1">
    <property type="nucleotide sequence ID" value="NC_007492.2"/>
</dbReference>
<dbReference type="SMR" id="Q3KF15"/>
<dbReference type="KEGG" id="pfo:Pfl01_1898"/>
<dbReference type="eggNOG" id="COG0777">
    <property type="taxonomic scope" value="Bacteria"/>
</dbReference>
<dbReference type="HOGENOM" id="CLU_015486_1_0_6"/>
<dbReference type="UniPathway" id="UPA00655">
    <property type="reaction ID" value="UER00711"/>
</dbReference>
<dbReference type="Proteomes" id="UP000002704">
    <property type="component" value="Chromosome"/>
</dbReference>
<dbReference type="GO" id="GO:0009329">
    <property type="term" value="C:acetate CoA-transferase complex"/>
    <property type="evidence" value="ECO:0007669"/>
    <property type="project" value="TreeGrafter"/>
</dbReference>
<dbReference type="GO" id="GO:0003989">
    <property type="term" value="F:acetyl-CoA carboxylase activity"/>
    <property type="evidence" value="ECO:0007669"/>
    <property type="project" value="InterPro"/>
</dbReference>
<dbReference type="GO" id="GO:0005524">
    <property type="term" value="F:ATP binding"/>
    <property type="evidence" value="ECO:0007669"/>
    <property type="project" value="UniProtKB-KW"/>
</dbReference>
<dbReference type="GO" id="GO:0016743">
    <property type="term" value="F:carboxyl- or carbamoyltransferase activity"/>
    <property type="evidence" value="ECO:0007669"/>
    <property type="project" value="UniProtKB-UniRule"/>
</dbReference>
<dbReference type="GO" id="GO:0008270">
    <property type="term" value="F:zinc ion binding"/>
    <property type="evidence" value="ECO:0007669"/>
    <property type="project" value="UniProtKB-UniRule"/>
</dbReference>
<dbReference type="GO" id="GO:0006633">
    <property type="term" value="P:fatty acid biosynthetic process"/>
    <property type="evidence" value="ECO:0007669"/>
    <property type="project" value="UniProtKB-KW"/>
</dbReference>
<dbReference type="GO" id="GO:2001295">
    <property type="term" value="P:malonyl-CoA biosynthetic process"/>
    <property type="evidence" value="ECO:0007669"/>
    <property type="project" value="UniProtKB-UniRule"/>
</dbReference>
<dbReference type="Gene3D" id="3.90.226.10">
    <property type="entry name" value="2-enoyl-CoA Hydratase, Chain A, domain 1"/>
    <property type="match status" value="1"/>
</dbReference>
<dbReference type="HAMAP" id="MF_01395">
    <property type="entry name" value="AcetylCoA_CT_beta"/>
    <property type="match status" value="1"/>
</dbReference>
<dbReference type="InterPro" id="IPR034733">
    <property type="entry name" value="AcCoA_carboxyl_beta"/>
</dbReference>
<dbReference type="InterPro" id="IPR000438">
    <property type="entry name" value="Acetyl_CoA_COase_Trfase_b_su"/>
</dbReference>
<dbReference type="InterPro" id="IPR029045">
    <property type="entry name" value="ClpP/crotonase-like_dom_sf"/>
</dbReference>
<dbReference type="InterPro" id="IPR011762">
    <property type="entry name" value="COA_CT_N"/>
</dbReference>
<dbReference type="InterPro" id="IPR041010">
    <property type="entry name" value="Znf-ACC"/>
</dbReference>
<dbReference type="NCBIfam" id="TIGR00515">
    <property type="entry name" value="accD"/>
    <property type="match status" value="1"/>
</dbReference>
<dbReference type="PANTHER" id="PTHR42995">
    <property type="entry name" value="ACETYL-COENZYME A CARBOXYLASE CARBOXYL TRANSFERASE SUBUNIT BETA, CHLOROPLASTIC"/>
    <property type="match status" value="1"/>
</dbReference>
<dbReference type="PANTHER" id="PTHR42995:SF5">
    <property type="entry name" value="ACETYL-COENZYME A CARBOXYLASE CARBOXYL TRANSFERASE SUBUNIT BETA, CHLOROPLASTIC"/>
    <property type="match status" value="1"/>
</dbReference>
<dbReference type="Pfam" id="PF01039">
    <property type="entry name" value="Carboxyl_trans"/>
    <property type="match status" value="1"/>
</dbReference>
<dbReference type="Pfam" id="PF17848">
    <property type="entry name" value="Zn_ribbon_ACC"/>
    <property type="match status" value="1"/>
</dbReference>
<dbReference type="PRINTS" id="PR01070">
    <property type="entry name" value="ACCCTRFRASEB"/>
</dbReference>
<dbReference type="SUPFAM" id="SSF52096">
    <property type="entry name" value="ClpP/crotonase"/>
    <property type="match status" value="1"/>
</dbReference>
<dbReference type="PROSITE" id="PS50980">
    <property type="entry name" value="COA_CT_NTER"/>
    <property type="match status" value="1"/>
</dbReference>
<gene>
    <name evidence="1" type="primary">accD</name>
    <name type="ordered locus">Pfl01_1898</name>
</gene>
<proteinExistence type="inferred from homology"/>
<reference key="1">
    <citation type="journal article" date="2009" name="Genome Biol.">
        <title>Genomic and genetic analyses of diversity and plant interactions of Pseudomonas fluorescens.</title>
        <authorList>
            <person name="Silby M.W."/>
            <person name="Cerdeno-Tarraga A.M."/>
            <person name="Vernikos G.S."/>
            <person name="Giddens S.R."/>
            <person name="Jackson R.W."/>
            <person name="Preston G.M."/>
            <person name="Zhang X.-X."/>
            <person name="Moon C.D."/>
            <person name="Gehrig S.M."/>
            <person name="Godfrey S.A.C."/>
            <person name="Knight C.G."/>
            <person name="Malone J.G."/>
            <person name="Robinson Z."/>
            <person name="Spiers A.J."/>
            <person name="Harris S."/>
            <person name="Challis G.L."/>
            <person name="Yaxley A.M."/>
            <person name="Harris D."/>
            <person name="Seeger K."/>
            <person name="Murphy L."/>
            <person name="Rutter S."/>
            <person name="Squares R."/>
            <person name="Quail M.A."/>
            <person name="Saunders E."/>
            <person name="Mavromatis K."/>
            <person name="Brettin T.S."/>
            <person name="Bentley S.D."/>
            <person name="Hothersall J."/>
            <person name="Stephens E."/>
            <person name="Thomas C.M."/>
            <person name="Parkhill J."/>
            <person name="Levy S.B."/>
            <person name="Rainey P.B."/>
            <person name="Thomson N.R."/>
        </authorList>
    </citation>
    <scope>NUCLEOTIDE SEQUENCE [LARGE SCALE GENOMIC DNA]</scope>
    <source>
        <strain>Pf0-1</strain>
    </source>
</reference>
<accession>Q3KF15</accession>
<feature type="chain" id="PRO_0000359038" description="Acetyl-coenzyme A carboxylase carboxyl transferase subunit beta">
    <location>
        <begin position="1"/>
        <end position="306"/>
    </location>
</feature>
<feature type="domain" description="CoA carboxyltransferase N-terminal" evidence="2">
    <location>
        <begin position="27"/>
        <end position="296"/>
    </location>
</feature>
<feature type="zinc finger region" description="C4-type" evidence="1">
    <location>
        <begin position="31"/>
        <end position="53"/>
    </location>
</feature>
<feature type="binding site" evidence="1">
    <location>
        <position position="31"/>
    </location>
    <ligand>
        <name>Zn(2+)</name>
        <dbReference type="ChEBI" id="CHEBI:29105"/>
    </ligand>
</feature>
<feature type="binding site" evidence="1">
    <location>
        <position position="34"/>
    </location>
    <ligand>
        <name>Zn(2+)</name>
        <dbReference type="ChEBI" id="CHEBI:29105"/>
    </ligand>
</feature>
<feature type="binding site" evidence="1">
    <location>
        <position position="50"/>
    </location>
    <ligand>
        <name>Zn(2+)</name>
        <dbReference type="ChEBI" id="CHEBI:29105"/>
    </ligand>
</feature>
<feature type="binding site" evidence="1">
    <location>
        <position position="53"/>
    </location>
    <ligand>
        <name>Zn(2+)</name>
        <dbReference type="ChEBI" id="CHEBI:29105"/>
    </ligand>
</feature>
<organism>
    <name type="scientific">Pseudomonas fluorescens (strain Pf0-1)</name>
    <dbReference type="NCBI Taxonomy" id="205922"/>
    <lineage>
        <taxon>Bacteria</taxon>
        <taxon>Pseudomonadati</taxon>
        <taxon>Pseudomonadota</taxon>
        <taxon>Gammaproteobacteria</taxon>
        <taxon>Pseudomonadales</taxon>
        <taxon>Pseudomonadaceae</taxon>
        <taxon>Pseudomonas</taxon>
    </lineage>
</organism>
<sequence length="306" mass="33455">MSNWLVDKLIPSIMRSEVKKSSVPEGLWHKCPSCEAVLYRPELEKTLDVCPKCNHHMRIGARARIDIFLDAEGRTELGADLEPVDRLKFRDGKKYKDRLVAAQKQTGEKDALVSMSGTLLGMPVVVSAFEFSFMGGSMGAIVGERFVRAANYALENRCPMVCFSASGGARMQEALISLMQMAKTSAVLARLREEGIPFISVLTDPVYGGVSASLAMLGDVIVGEPKALIGFAGPRVIEQTVREKLPEGFQRSEFLLEHGAIDLIIDRRELRPRLGNLLAQLTGKPTPKFVAAPIEPIVVPPVPANV</sequence>
<protein>
    <recommendedName>
        <fullName evidence="1">Acetyl-coenzyme A carboxylase carboxyl transferase subunit beta</fullName>
        <shortName evidence="1">ACCase subunit beta</shortName>
        <shortName evidence="1">Acetyl-CoA carboxylase carboxyltransferase subunit beta</shortName>
        <ecNumber evidence="1">2.1.3.15</ecNumber>
    </recommendedName>
</protein>
<evidence type="ECO:0000255" key="1">
    <source>
        <dbReference type="HAMAP-Rule" id="MF_01395"/>
    </source>
</evidence>
<evidence type="ECO:0000255" key="2">
    <source>
        <dbReference type="PROSITE-ProRule" id="PRU01136"/>
    </source>
</evidence>